<name>RL31_PSEA6</name>
<dbReference type="EMBL" id="CP000388">
    <property type="protein sequence ID" value="ABG42687.1"/>
    <property type="molecule type" value="Genomic_DNA"/>
</dbReference>
<dbReference type="RefSeq" id="WP_011576878.1">
    <property type="nucleotide sequence ID" value="NC_008228.1"/>
</dbReference>
<dbReference type="SMR" id="Q15N51"/>
<dbReference type="STRING" id="342610.Patl_4188"/>
<dbReference type="KEGG" id="pat:Patl_4188"/>
<dbReference type="eggNOG" id="COG0254">
    <property type="taxonomic scope" value="Bacteria"/>
</dbReference>
<dbReference type="HOGENOM" id="CLU_114306_4_0_6"/>
<dbReference type="OrthoDB" id="9803251at2"/>
<dbReference type="Proteomes" id="UP000001981">
    <property type="component" value="Chromosome"/>
</dbReference>
<dbReference type="GO" id="GO:1990904">
    <property type="term" value="C:ribonucleoprotein complex"/>
    <property type="evidence" value="ECO:0007669"/>
    <property type="project" value="UniProtKB-KW"/>
</dbReference>
<dbReference type="GO" id="GO:0005840">
    <property type="term" value="C:ribosome"/>
    <property type="evidence" value="ECO:0007669"/>
    <property type="project" value="UniProtKB-KW"/>
</dbReference>
<dbReference type="GO" id="GO:0046872">
    <property type="term" value="F:metal ion binding"/>
    <property type="evidence" value="ECO:0007669"/>
    <property type="project" value="UniProtKB-KW"/>
</dbReference>
<dbReference type="GO" id="GO:0019843">
    <property type="term" value="F:rRNA binding"/>
    <property type="evidence" value="ECO:0007669"/>
    <property type="project" value="UniProtKB-KW"/>
</dbReference>
<dbReference type="GO" id="GO:0003735">
    <property type="term" value="F:structural constituent of ribosome"/>
    <property type="evidence" value="ECO:0007669"/>
    <property type="project" value="InterPro"/>
</dbReference>
<dbReference type="GO" id="GO:0006412">
    <property type="term" value="P:translation"/>
    <property type="evidence" value="ECO:0007669"/>
    <property type="project" value="UniProtKB-UniRule"/>
</dbReference>
<dbReference type="Gene3D" id="4.10.830.30">
    <property type="entry name" value="Ribosomal protein L31"/>
    <property type="match status" value="1"/>
</dbReference>
<dbReference type="HAMAP" id="MF_00501">
    <property type="entry name" value="Ribosomal_bL31_1"/>
    <property type="match status" value="1"/>
</dbReference>
<dbReference type="InterPro" id="IPR034704">
    <property type="entry name" value="Ribosomal_bL28/bL31-like_sf"/>
</dbReference>
<dbReference type="InterPro" id="IPR002150">
    <property type="entry name" value="Ribosomal_bL31"/>
</dbReference>
<dbReference type="InterPro" id="IPR027491">
    <property type="entry name" value="Ribosomal_bL31_A"/>
</dbReference>
<dbReference type="InterPro" id="IPR042105">
    <property type="entry name" value="Ribosomal_bL31_sf"/>
</dbReference>
<dbReference type="NCBIfam" id="TIGR00105">
    <property type="entry name" value="L31"/>
    <property type="match status" value="1"/>
</dbReference>
<dbReference type="NCBIfam" id="NF000612">
    <property type="entry name" value="PRK00019.1"/>
    <property type="match status" value="1"/>
</dbReference>
<dbReference type="NCBIfam" id="NF001809">
    <property type="entry name" value="PRK00528.1"/>
    <property type="match status" value="1"/>
</dbReference>
<dbReference type="PANTHER" id="PTHR33280">
    <property type="entry name" value="50S RIBOSOMAL PROTEIN L31, CHLOROPLASTIC"/>
    <property type="match status" value="1"/>
</dbReference>
<dbReference type="PANTHER" id="PTHR33280:SF6">
    <property type="entry name" value="LARGE RIBOSOMAL SUBUNIT PROTEIN BL31A"/>
    <property type="match status" value="1"/>
</dbReference>
<dbReference type="Pfam" id="PF01197">
    <property type="entry name" value="Ribosomal_L31"/>
    <property type="match status" value="1"/>
</dbReference>
<dbReference type="PRINTS" id="PR01249">
    <property type="entry name" value="RIBOSOMALL31"/>
</dbReference>
<dbReference type="SUPFAM" id="SSF143800">
    <property type="entry name" value="L28p-like"/>
    <property type="match status" value="1"/>
</dbReference>
<dbReference type="PROSITE" id="PS01143">
    <property type="entry name" value="RIBOSOMAL_L31"/>
    <property type="match status" value="1"/>
</dbReference>
<sequence length="71" mass="7925">MKTGIHPDYQDMKATCSCGNVIVVRSTLKKDLNLDVCSACHPFYTGKQRNVDTGGRVDKFNKRFSALSTKK</sequence>
<evidence type="ECO:0000255" key="1">
    <source>
        <dbReference type="HAMAP-Rule" id="MF_00501"/>
    </source>
</evidence>
<evidence type="ECO:0000305" key="2"/>
<gene>
    <name evidence="1" type="primary">rpmE</name>
    <name type="ordered locus">Patl_4188</name>
</gene>
<organism>
    <name type="scientific">Pseudoalteromonas atlantica (strain T6c / ATCC BAA-1087)</name>
    <dbReference type="NCBI Taxonomy" id="3042615"/>
    <lineage>
        <taxon>Bacteria</taxon>
        <taxon>Pseudomonadati</taxon>
        <taxon>Pseudomonadota</taxon>
        <taxon>Gammaproteobacteria</taxon>
        <taxon>Alteromonadales</taxon>
        <taxon>Alteromonadaceae</taxon>
        <taxon>Paraglaciecola</taxon>
    </lineage>
</organism>
<keyword id="KW-0479">Metal-binding</keyword>
<keyword id="KW-0687">Ribonucleoprotein</keyword>
<keyword id="KW-0689">Ribosomal protein</keyword>
<keyword id="KW-0694">RNA-binding</keyword>
<keyword id="KW-0699">rRNA-binding</keyword>
<keyword id="KW-0862">Zinc</keyword>
<feature type="chain" id="PRO_1000126696" description="Large ribosomal subunit protein bL31">
    <location>
        <begin position="1"/>
        <end position="71"/>
    </location>
</feature>
<feature type="binding site" evidence="1">
    <location>
        <position position="16"/>
    </location>
    <ligand>
        <name>Zn(2+)</name>
        <dbReference type="ChEBI" id="CHEBI:29105"/>
    </ligand>
</feature>
<feature type="binding site" evidence="1">
    <location>
        <position position="18"/>
    </location>
    <ligand>
        <name>Zn(2+)</name>
        <dbReference type="ChEBI" id="CHEBI:29105"/>
    </ligand>
</feature>
<feature type="binding site" evidence="1">
    <location>
        <position position="37"/>
    </location>
    <ligand>
        <name>Zn(2+)</name>
        <dbReference type="ChEBI" id="CHEBI:29105"/>
    </ligand>
</feature>
<feature type="binding site" evidence="1">
    <location>
        <position position="40"/>
    </location>
    <ligand>
        <name>Zn(2+)</name>
        <dbReference type="ChEBI" id="CHEBI:29105"/>
    </ligand>
</feature>
<accession>Q15N51</accession>
<comment type="function">
    <text evidence="1">Binds the 23S rRNA.</text>
</comment>
<comment type="cofactor">
    <cofactor evidence="1">
        <name>Zn(2+)</name>
        <dbReference type="ChEBI" id="CHEBI:29105"/>
    </cofactor>
    <text evidence="1">Binds 1 zinc ion per subunit.</text>
</comment>
<comment type="subunit">
    <text evidence="1">Part of the 50S ribosomal subunit.</text>
</comment>
<comment type="similarity">
    <text evidence="1">Belongs to the bacterial ribosomal protein bL31 family. Type A subfamily.</text>
</comment>
<protein>
    <recommendedName>
        <fullName evidence="1">Large ribosomal subunit protein bL31</fullName>
    </recommendedName>
    <alternativeName>
        <fullName evidence="2">50S ribosomal protein L31</fullName>
    </alternativeName>
</protein>
<reference key="1">
    <citation type="submission" date="2006-06" db="EMBL/GenBank/DDBJ databases">
        <title>Complete sequence of Pseudoalteromonas atlantica T6c.</title>
        <authorList>
            <consortium name="US DOE Joint Genome Institute"/>
            <person name="Copeland A."/>
            <person name="Lucas S."/>
            <person name="Lapidus A."/>
            <person name="Barry K."/>
            <person name="Detter J.C."/>
            <person name="Glavina del Rio T."/>
            <person name="Hammon N."/>
            <person name="Israni S."/>
            <person name="Dalin E."/>
            <person name="Tice H."/>
            <person name="Pitluck S."/>
            <person name="Saunders E."/>
            <person name="Brettin T."/>
            <person name="Bruce D."/>
            <person name="Han C."/>
            <person name="Tapia R."/>
            <person name="Gilna P."/>
            <person name="Schmutz J."/>
            <person name="Larimer F."/>
            <person name="Land M."/>
            <person name="Hauser L."/>
            <person name="Kyrpides N."/>
            <person name="Kim E."/>
            <person name="Karls A.C."/>
            <person name="Bartlett D."/>
            <person name="Higgins B.P."/>
            <person name="Richardson P."/>
        </authorList>
    </citation>
    <scope>NUCLEOTIDE SEQUENCE [LARGE SCALE GENOMIC DNA]</scope>
    <source>
        <strain>T6c / ATCC BAA-1087</strain>
    </source>
</reference>
<proteinExistence type="inferred from homology"/>